<comment type="function">
    <text evidence="1">Part of a heterotetrameric complex that catalyzes the two-step biosynthesis of anthranilate, an intermediate in the biosynthesis of L-tryptophan. In the first step, the glutamine-binding beta subunit (TrpG) of anthranilate synthase (AS) provides the glutamine amidotransferase activity which generates ammonia as a substrate that, along with chorismate, is used in the second step, catalyzed by the large alpha subunit of AS (TrpE) to produce anthranilate. In the absence of TrpG, TrpE can synthesize anthranilate directly from chorismate and high concentrations of ammonia (By similarity).</text>
</comment>
<comment type="catalytic activity">
    <reaction>
        <text>chorismate + L-glutamine = anthranilate + pyruvate + L-glutamate + H(+)</text>
        <dbReference type="Rhea" id="RHEA:21732"/>
        <dbReference type="ChEBI" id="CHEBI:15361"/>
        <dbReference type="ChEBI" id="CHEBI:15378"/>
        <dbReference type="ChEBI" id="CHEBI:16567"/>
        <dbReference type="ChEBI" id="CHEBI:29748"/>
        <dbReference type="ChEBI" id="CHEBI:29985"/>
        <dbReference type="ChEBI" id="CHEBI:58359"/>
        <dbReference type="EC" id="4.1.3.27"/>
    </reaction>
</comment>
<comment type="cofactor">
    <cofactor evidence="2">
        <name>Mg(2+)</name>
        <dbReference type="ChEBI" id="CHEBI:18420"/>
    </cofactor>
    <text evidence="2">Binds 1 Mg(2+) ion per subunit.</text>
</comment>
<comment type="activity regulation">
    <text evidence="1">Feedback inhibited by tryptophan.</text>
</comment>
<comment type="pathway">
    <text>Amino-acid biosynthesis; L-tryptophan biosynthesis; L-tryptophan from chorismate: step 1/5.</text>
</comment>
<comment type="subunit">
    <text evidence="1">Heterotetramer consisting of two non-identical subunits: a beta subunit (TrpG) and a large alpha subunit (TrpE).</text>
</comment>
<comment type="similarity">
    <text evidence="3">Belongs to the anthranilate synthase component I family.</text>
</comment>
<organism>
    <name type="scientific">Neisseria meningitidis serogroup B (strain ATCC BAA-335 / MC58)</name>
    <dbReference type="NCBI Taxonomy" id="122586"/>
    <lineage>
        <taxon>Bacteria</taxon>
        <taxon>Pseudomonadati</taxon>
        <taxon>Pseudomonadota</taxon>
        <taxon>Betaproteobacteria</taxon>
        <taxon>Neisseriales</taxon>
        <taxon>Neisseriaceae</taxon>
        <taxon>Neisseria</taxon>
    </lineage>
</organism>
<dbReference type="EC" id="4.1.3.27"/>
<dbReference type="EMBL" id="AE002098">
    <property type="protein sequence ID" value="AAF41421.1"/>
    <property type="molecule type" value="Genomic_DNA"/>
</dbReference>
<dbReference type="PIR" id="E81132">
    <property type="entry name" value="E81132"/>
</dbReference>
<dbReference type="RefSeq" id="NP_274055.1">
    <property type="nucleotide sequence ID" value="NC_003112.2"/>
</dbReference>
<dbReference type="RefSeq" id="WP_002219345.1">
    <property type="nucleotide sequence ID" value="NC_003112.2"/>
</dbReference>
<dbReference type="SMR" id="P56995"/>
<dbReference type="FunCoup" id="P56995">
    <property type="interactions" value="334"/>
</dbReference>
<dbReference type="STRING" id="122586.NMB1021"/>
<dbReference type="PaxDb" id="122586-NMB1021"/>
<dbReference type="KEGG" id="nme:NMB1021"/>
<dbReference type="PATRIC" id="fig|122586.8.peg.1305"/>
<dbReference type="HOGENOM" id="CLU_006493_9_3_4"/>
<dbReference type="InParanoid" id="P56995"/>
<dbReference type="OrthoDB" id="9803598at2"/>
<dbReference type="UniPathway" id="UPA00035">
    <property type="reaction ID" value="UER00040"/>
</dbReference>
<dbReference type="Proteomes" id="UP000000425">
    <property type="component" value="Chromosome"/>
</dbReference>
<dbReference type="GO" id="GO:0004049">
    <property type="term" value="F:anthranilate synthase activity"/>
    <property type="evidence" value="ECO:0007669"/>
    <property type="project" value="UniProtKB-EC"/>
</dbReference>
<dbReference type="GO" id="GO:0046872">
    <property type="term" value="F:metal ion binding"/>
    <property type="evidence" value="ECO:0007669"/>
    <property type="project" value="UniProtKB-KW"/>
</dbReference>
<dbReference type="GO" id="GO:0000162">
    <property type="term" value="P:L-tryptophan biosynthetic process"/>
    <property type="evidence" value="ECO:0000318"/>
    <property type="project" value="GO_Central"/>
</dbReference>
<dbReference type="Gene3D" id="3.60.120.10">
    <property type="entry name" value="Anthranilate synthase"/>
    <property type="match status" value="1"/>
</dbReference>
<dbReference type="InterPro" id="IPR005801">
    <property type="entry name" value="ADC_synthase"/>
</dbReference>
<dbReference type="InterPro" id="IPR019999">
    <property type="entry name" value="Anth_synth_I-like"/>
</dbReference>
<dbReference type="InterPro" id="IPR006805">
    <property type="entry name" value="Anth_synth_I_N"/>
</dbReference>
<dbReference type="InterPro" id="IPR005256">
    <property type="entry name" value="Anth_synth_I_PabB"/>
</dbReference>
<dbReference type="InterPro" id="IPR015890">
    <property type="entry name" value="Chorismate_C"/>
</dbReference>
<dbReference type="NCBIfam" id="TIGR00564">
    <property type="entry name" value="trpE_most"/>
    <property type="match status" value="1"/>
</dbReference>
<dbReference type="PANTHER" id="PTHR11236">
    <property type="entry name" value="AMINOBENZOATE/ANTHRANILATE SYNTHASE"/>
    <property type="match status" value="1"/>
</dbReference>
<dbReference type="PANTHER" id="PTHR11236:SF48">
    <property type="entry name" value="ISOCHORISMATE SYNTHASE MENF"/>
    <property type="match status" value="1"/>
</dbReference>
<dbReference type="Pfam" id="PF04715">
    <property type="entry name" value="Anth_synt_I_N"/>
    <property type="match status" value="1"/>
</dbReference>
<dbReference type="Pfam" id="PF00425">
    <property type="entry name" value="Chorismate_bind"/>
    <property type="match status" value="1"/>
</dbReference>
<dbReference type="PRINTS" id="PR00095">
    <property type="entry name" value="ANTSNTHASEI"/>
</dbReference>
<dbReference type="SUPFAM" id="SSF56322">
    <property type="entry name" value="ADC synthase"/>
    <property type="match status" value="1"/>
</dbReference>
<evidence type="ECO:0000250" key="1"/>
<evidence type="ECO:0000250" key="2">
    <source>
        <dbReference type="UniProtKB" id="P00897"/>
    </source>
</evidence>
<evidence type="ECO:0000305" key="3"/>
<keyword id="KW-0028">Amino-acid biosynthesis</keyword>
<keyword id="KW-0057">Aromatic amino acid biosynthesis</keyword>
<keyword id="KW-0456">Lyase</keyword>
<keyword id="KW-0460">Magnesium</keyword>
<keyword id="KW-0479">Metal-binding</keyword>
<keyword id="KW-1185">Reference proteome</keyword>
<keyword id="KW-0822">Tryptophan biosynthesis</keyword>
<proteinExistence type="inferred from homology"/>
<name>TRPE_NEIMB</name>
<feature type="chain" id="PRO_0000154104" description="Anthranilate synthase component 1">
    <location>
        <begin position="1"/>
        <end position="491"/>
    </location>
</feature>
<feature type="binding site" evidence="2">
    <location>
        <position position="49"/>
    </location>
    <ligand>
        <name>L-tryptophan</name>
        <dbReference type="ChEBI" id="CHEBI:57912"/>
    </ligand>
</feature>
<feature type="binding site" evidence="2">
    <location>
        <begin position="271"/>
        <end position="273"/>
    </location>
    <ligand>
        <name>L-tryptophan</name>
        <dbReference type="ChEBI" id="CHEBI:57912"/>
    </ligand>
</feature>
<feature type="binding site" evidence="2">
    <location>
        <begin position="306"/>
        <end position="307"/>
    </location>
    <ligand>
        <name>chorismate</name>
        <dbReference type="ChEBI" id="CHEBI:29748"/>
    </ligand>
</feature>
<feature type="binding site" evidence="2">
    <location>
        <position position="333"/>
    </location>
    <ligand>
        <name>Mg(2+)</name>
        <dbReference type="ChEBI" id="CHEBI:18420"/>
    </ligand>
</feature>
<feature type="binding site" evidence="2">
    <location>
        <position position="421"/>
    </location>
    <ligand>
        <name>chorismate</name>
        <dbReference type="ChEBI" id="CHEBI:29748"/>
    </ligand>
</feature>
<feature type="binding site" evidence="2">
    <location>
        <position position="441"/>
    </location>
    <ligand>
        <name>chorismate</name>
        <dbReference type="ChEBI" id="CHEBI:29748"/>
    </ligand>
</feature>
<feature type="binding site" evidence="2">
    <location>
        <begin position="455"/>
        <end position="457"/>
    </location>
    <ligand>
        <name>chorismate</name>
        <dbReference type="ChEBI" id="CHEBI:29748"/>
    </ligand>
</feature>
<feature type="binding site" evidence="2">
    <location>
        <position position="457"/>
    </location>
    <ligand>
        <name>chorismate</name>
        <dbReference type="ChEBI" id="CHEBI:29748"/>
    </ligand>
</feature>
<feature type="binding site" evidence="2">
    <location>
        <position position="470"/>
    </location>
    <ligand>
        <name>Mg(2+)</name>
        <dbReference type="ChEBI" id="CHEBI:18420"/>
    </ligand>
</feature>
<sequence length="491" mass="54702">MISKQEYQAQAAQGYNRIPLVQELLADLDTPLSLYLKLANRPYTYLLESVVGGERFGRYSFIGLPCSHYLKASGKHVDVYQNGEIVEQHDGNPLPFIEAFHNRFKTPEIPSLPRFTGGLVGYFGYETIYNFEHFAHRLKNTTKADPLGTPDILLMLSQELAVIDNLSGKIHLVVYADPSQPDGYERARERLEDIRTQLRQSCAIPLSLGSKHTEAVSEFGEEPFKACVNKIKDYIFAGDCMQVVPSQRMSMEFTDSPLALYRALRTLNPSPYLFYYDFGDFHIVGSSPEILVRRERNDVIVRPIAGTRLRGKTPAEDLANEQDLLSDAKEIAEHVMLIDLGRNDVGRISKTGEVKVTDKMVIEKYSHVMHIVSNVEGRLKDGMTNMDILAATFPAGTLSGAPKVRAMEIIEEVEPSKRGIYGGAVGVWGFNNDMDLAIAIRTAVVKNNTLYVQSGAGVVADSDPASEWQETQNKARAVIHAAQMVQEGLDK</sequence>
<reference key="1">
    <citation type="journal article" date="2000" name="Science">
        <title>Complete genome sequence of Neisseria meningitidis serogroup B strain MC58.</title>
        <authorList>
            <person name="Tettelin H."/>
            <person name="Saunders N.J."/>
            <person name="Heidelberg J.F."/>
            <person name="Jeffries A.C."/>
            <person name="Nelson K.E."/>
            <person name="Eisen J.A."/>
            <person name="Ketchum K.A."/>
            <person name="Hood D.W."/>
            <person name="Peden J.F."/>
            <person name="Dodson R.J."/>
            <person name="Nelson W.C."/>
            <person name="Gwinn M.L."/>
            <person name="DeBoy R.T."/>
            <person name="Peterson J.D."/>
            <person name="Hickey E.K."/>
            <person name="Haft D.H."/>
            <person name="Salzberg S.L."/>
            <person name="White O."/>
            <person name="Fleischmann R.D."/>
            <person name="Dougherty B.A."/>
            <person name="Mason T.M."/>
            <person name="Ciecko A."/>
            <person name="Parksey D.S."/>
            <person name="Blair E."/>
            <person name="Cittone H."/>
            <person name="Clark E.B."/>
            <person name="Cotton M.D."/>
            <person name="Utterback T.R."/>
            <person name="Khouri H.M."/>
            <person name="Qin H."/>
            <person name="Vamathevan J.J."/>
            <person name="Gill J."/>
            <person name="Scarlato V."/>
            <person name="Masignani V."/>
            <person name="Pizza M."/>
            <person name="Grandi G."/>
            <person name="Sun L."/>
            <person name="Smith H.O."/>
            <person name="Fraser C.M."/>
            <person name="Moxon E.R."/>
            <person name="Rappuoli R."/>
            <person name="Venter J.C."/>
        </authorList>
    </citation>
    <scope>NUCLEOTIDE SEQUENCE [LARGE SCALE GENOMIC DNA]</scope>
    <source>
        <strain>ATCC BAA-335 / MC58</strain>
    </source>
</reference>
<protein>
    <recommendedName>
        <fullName>Anthranilate synthase component 1</fullName>
        <shortName>AS</shortName>
        <shortName>ASI</shortName>
        <ecNumber>4.1.3.27</ecNumber>
    </recommendedName>
</protein>
<gene>
    <name type="primary">trpE</name>
    <name type="ordered locus">NMB1021</name>
</gene>
<accession>P56995</accession>